<dbReference type="EC" id="2.2.1.6"/>
<dbReference type="EMBL" id="AE000516">
    <property type="protein sequence ID" value="AAK47411.1"/>
    <property type="molecule type" value="Genomic_DNA"/>
</dbReference>
<dbReference type="PIR" id="E70855">
    <property type="entry name" value="E70855"/>
</dbReference>
<dbReference type="RefSeq" id="WP_003415167.1">
    <property type="nucleotide sequence ID" value="NZ_KK341227.1"/>
</dbReference>
<dbReference type="SMR" id="P9WKJ2"/>
<dbReference type="GeneID" id="45426992"/>
<dbReference type="KEGG" id="mtc:MT3082"/>
<dbReference type="PATRIC" id="fig|83331.31.peg.3323"/>
<dbReference type="HOGENOM" id="CLU_055003_1_3_11"/>
<dbReference type="UniPathway" id="UPA00047">
    <property type="reaction ID" value="UER00055"/>
</dbReference>
<dbReference type="UniPathway" id="UPA00049">
    <property type="reaction ID" value="UER00059"/>
</dbReference>
<dbReference type="Proteomes" id="UP000001020">
    <property type="component" value="Chromosome"/>
</dbReference>
<dbReference type="GO" id="GO:0005829">
    <property type="term" value="C:cytosol"/>
    <property type="evidence" value="ECO:0007669"/>
    <property type="project" value="TreeGrafter"/>
</dbReference>
<dbReference type="GO" id="GO:0003984">
    <property type="term" value="F:acetolactate synthase activity"/>
    <property type="evidence" value="ECO:0007669"/>
    <property type="project" value="UniProtKB-EC"/>
</dbReference>
<dbReference type="GO" id="GO:1990610">
    <property type="term" value="F:acetolactate synthase regulator activity"/>
    <property type="evidence" value="ECO:0007669"/>
    <property type="project" value="InterPro"/>
</dbReference>
<dbReference type="GO" id="GO:0009097">
    <property type="term" value="P:isoleucine biosynthetic process"/>
    <property type="evidence" value="ECO:0007669"/>
    <property type="project" value="UniProtKB-UniPathway"/>
</dbReference>
<dbReference type="GO" id="GO:0009099">
    <property type="term" value="P:L-valine biosynthetic process"/>
    <property type="evidence" value="ECO:0007669"/>
    <property type="project" value="UniProtKB-UniPathway"/>
</dbReference>
<dbReference type="CDD" id="cd04878">
    <property type="entry name" value="ACT_AHAS"/>
    <property type="match status" value="1"/>
</dbReference>
<dbReference type="FunFam" id="3.30.70.1150:FF:000001">
    <property type="entry name" value="Acetolactate synthase small subunit"/>
    <property type="match status" value="1"/>
</dbReference>
<dbReference type="FunFam" id="3.30.70.260:FF:000001">
    <property type="entry name" value="Acetolactate synthase, small subunit"/>
    <property type="match status" value="1"/>
</dbReference>
<dbReference type="Gene3D" id="3.30.70.260">
    <property type="match status" value="1"/>
</dbReference>
<dbReference type="Gene3D" id="3.30.70.1150">
    <property type="entry name" value="ACT-like. Chain A, domain 2"/>
    <property type="match status" value="1"/>
</dbReference>
<dbReference type="InterPro" id="IPR004789">
    <property type="entry name" value="Acetalactate_synth_ssu"/>
</dbReference>
<dbReference type="InterPro" id="IPR027271">
    <property type="entry name" value="Acetolactate_synth/TF_NikR_C"/>
</dbReference>
<dbReference type="InterPro" id="IPR019455">
    <property type="entry name" value="Acetolactate_synth_ssu_C"/>
</dbReference>
<dbReference type="InterPro" id="IPR045865">
    <property type="entry name" value="ACT-like_dom_sf"/>
</dbReference>
<dbReference type="InterPro" id="IPR002912">
    <property type="entry name" value="ACT_dom"/>
</dbReference>
<dbReference type="InterPro" id="IPR039557">
    <property type="entry name" value="AHAS_ACT"/>
</dbReference>
<dbReference type="InterPro" id="IPR054480">
    <property type="entry name" value="AHAS_small-like_ACT"/>
</dbReference>
<dbReference type="NCBIfam" id="TIGR00119">
    <property type="entry name" value="acolac_sm"/>
    <property type="match status" value="1"/>
</dbReference>
<dbReference type="NCBIfam" id="NF008864">
    <property type="entry name" value="PRK11895.1"/>
    <property type="match status" value="1"/>
</dbReference>
<dbReference type="PANTHER" id="PTHR30239">
    <property type="entry name" value="ACETOLACTATE SYNTHASE SMALL SUBUNIT"/>
    <property type="match status" value="1"/>
</dbReference>
<dbReference type="PANTHER" id="PTHR30239:SF0">
    <property type="entry name" value="ACETOLACTATE SYNTHASE SMALL SUBUNIT 1, CHLOROPLASTIC"/>
    <property type="match status" value="1"/>
</dbReference>
<dbReference type="Pfam" id="PF22629">
    <property type="entry name" value="ACT_AHAS_ss"/>
    <property type="match status" value="1"/>
</dbReference>
<dbReference type="Pfam" id="PF10369">
    <property type="entry name" value="ALS_ss_C"/>
    <property type="match status" value="1"/>
</dbReference>
<dbReference type="SUPFAM" id="SSF55021">
    <property type="entry name" value="ACT-like"/>
    <property type="match status" value="2"/>
</dbReference>
<dbReference type="PROSITE" id="PS51671">
    <property type="entry name" value="ACT"/>
    <property type="match status" value="1"/>
</dbReference>
<evidence type="ECO:0000250" key="1"/>
<evidence type="ECO:0000255" key="2">
    <source>
        <dbReference type="PROSITE-ProRule" id="PRU01007"/>
    </source>
</evidence>
<evidence type="ECO:0000305" key="3"/>
<accession>P9WKJ2</accession>
<accession>L0TE14</accession>
<accession>O53249</accession>
<accession>P65161</accession>
<gene>
    <name type="primary">ilvH</name>
    <name type="synonym">ilvN</name>
    <name type="ordered locus">MT3082</name>
</gene>
<name>ILVH_MYCTO</name>
<proteinExistence type="inferred from homology"/>
<keyword id="KW-0028">Amino-acid biosynthesis</keyword>
<keyword id="KW-0100">Branched-chain amino acid biosynthesis</keyword>
<keyword id="KW-1185">Reference proteome</keyword>
<keyword id="KW-0808">Transferase</keyword>
<reference key="1">
    <citation type="journal article" date="2002" name="J. Bacteriol.">
        <title>Whole-genome comparison of Mycobacterium tuberculosis clinical and laboratory strains.</title>
        <authorList>
            <person name="Fleischmann R.D."/>
            <person name="Alland D."/>
            <person name="Eisen J.A."/>
            <person name="Carpenter L."/>
            <person name="White O."/>
            <person name="Peterson J.D."/>
            <person name="DeBoy R.T."/>
            <person name="Dodson R.J."/>
            <person name="Gwinn M.L."/>
            <person name="Haft D.H."/>
            <person name="Hickey E.K."/>
            <person name="Kolonay J.F."/>
            <person name="Nelson W.C."/>
            <person name="Umayam L.A."/>
            <person name="Ermolaeva M.D."/>
            <person name="Salzberg S.L."/>
            <person name="Delcher A."/>
            <person name="Utterback T.R."/>
            <person name="Weidman J.F."/>
            <person name="Khouri H.M."/>
            <person name="Gill J."/>
            <person name="Mikula A."/>
            <person name="Bishai W."/>
            <person name="Jacobs W.R. Jr."/>
            <person name="Venter J.C."/>
            <person name="Fraser C.M."/>
        </authorList>
    </citation>
    <scope>NUCLEOTIDE SEQUENCE [LARGE SCALE GENOMIC DNA]</scope>
    <source>
        <strain>CDC 1551 / Oshkosh</strain>
    </source>
</reference>
<organism>
    <name type="scientific">Mycobacterium tuberculosis (strain CDC 1551 / Oshkosh)</name>
    <dbReference type="NCBI Taxonomy" id="83331"/>
    <lineage>
        <taxon>Bacteria</taxon>
        <taxon>Bacillati</taxon>
        <taxon>Actinomycetota</taxon>
        <taxon>Actinomycetes</taxon>
        <taxon>Mycobacteriales</taxon>
        <taxon>Mycobacteriaceae</taxon>
        <taxon>Mycobacterium</taxon>
        <taxon>Mycobacterium tuberculosis complex</taxon>
    </lineage>
</organism>
<feature type="chain" id="PRO_0000427644" description="Putative acetolactate synthase small subunit">
    <location>
        <begin position="1"/>
        <end position="168"/>
    </location>
</feature>
<feature type="domain" description="ACT" evidence="2">
    <location>
        <begin position="7"/>
        <end position="82"/>
    </location>
</feature>
<sequence length="168" mass="18187">MSPKTHTLSVLVEDKPGVLARVAALFSRRGFNIESLAVGATECKDRSRMTIVVSAEDTPLEQITKQLNKLINVIKIVEQDDEHSVSRELALIKVQADAGSRSQVIEAVNLFRANVIDVSPESLTVEATGNRGKLEALLRVLEPFGIREIAQSGMVSLSRGPRGIGTAK</sequence>
<protein>
    <recommendedName>
        <fullName>Putative acetolactate synthase small subunit</fullName>
        <ecNumber>2.2.1.6</ecNumber>
    </recommendedName>
    <alternativeName>
        <fullName>Acetohydroxy-acid synthase small subunit</fullName>
        <shortName>AHAS</shortName>
        <shortName>ALS</shortName>
    </alternativeName>
</protein>
<comment type="function">
    <text evidence="1">Catalyzes the conversion of 2 pyruvate molecules into acetolactate in the first common step of the biosynthetic pathway of the branched-amino acids such as leucine, isoleucine, and valine.</text>
</comment>
<comment type="catalytic activity">
    <reaction>
        <text>2 pyruvate + H(+) = (2S)-2-acetolactate + CO2</text>
        <dbReference type="Rhea" id="RHEA:25249"/>
        <dbReference type="ChEBI" id="CHEBI:15361"/>
        <dbReference type="ChEBI" id="CHEBI:15378"/>
        <dbReference type="ChEBI" id="CHEBI:16526"/>
        <dbReference type="ChEBI" id="CHEBI:58476"/>
        <dbReference type="EC" id="2.2.1.6"/>
    </reaction>
</comment>
<comment type="pathway">
    <text>Amino-acid biosynthesis; L-isoleucine biosynthesis; L-isoleucine from 2-oxobutanoate: step 1/4.</text>
</comment>
<comment type="pathway">
    <text>Amino-acid biosynthesis; L-valine biosynthesis; L-valine from pyruvate: step 1/4.</text>
</comment>
<comment type="subunit">
    <text evidence="1">Dimer of large and small chains.</text>
</comment>
<comment type="similarity">
    <text evidence="3">Belongs to the acetolactate synthase small subunit family.</text>
</comment>